<feature type="initiator methionine" description="Removed" evidence="1">
    <location>
        <position position="1"/>
    </location>
</feature>
<feature type="chain" id="PRO_0000228421" description="Formamidopyrimidine-DNA glycosylase">
    <location>
        <begin position="2"/>
        <end position="272"/>
    </location>
</feature>
<feature type="zinc finger region" description="FPG-type" evidence="2">
    <location>
        <begin position="238"/>
        <end position="272"/>
    </location>
</feature>
<feature type="active site" description="Schiff-base intermediate with DNA" evidence="2">
    <location>
        <position position="2"/>
    </location>
</feature>
<feature type="active site" description="Proton donor" evidence="2">
    <location>
        <position position="3"/>
    </location>
</feature>
<feature type="active site" description="Proton donor; for beta-elimination activity" evidence="2">
    <location>
        <position position="58"/>
    </location>
</feature>
<feature type="active site" description="Proton donor; for delta-elimination activity" evidence="2">
    <location>
        <position position="262"/>
    </location>
</feature>
<feature type="binding site" evidence="2">
    <location>
        <position position="94"/>
    </location>
    <ligand>
        <name>DNA</name>
        <dbReference type="ChEBI" id="CHEBI:16991"/>
    </ligand>
</feature>
<feature type="binding site" evidence="2">
    <location>
        <position position="112"/>
    </location>
    <ligand>
        <name>DNA</name>
        <dbReference type="ChEBI" id="CHEBI:16991"/>
    </ligand>
</feature>
<feature type="binding site" evidence="2">
    <location>
        <position position="153"/>
    </location>
    <ligand>
        <name>DNA</name>
        <dbReference type="ChEBI" id="CHEBI:16991"/>
    </ligand>
</feature>
<gene>
    <name evidence="2" type="primary">mutM</name>
    <name evidence="2" type="synonym">fpg</name>
    <name type="ordered locus">BMA3115</name>
</gene>
<evidence type="ECO:0000250" key="1"/>
<evidence type="ECO:0000255" key="2">
    <source>
        <dbReference type="HAMAP-Rule" id="MF_00103"/>
    </source>
</evidence>
<comment type="function">
    <text evidence="2">Involved in base excision repair of DNA damaged by oxidation or by mutagenic agents. Acts as a DNA glycosylase that recognizes and removes damaged bases. Has a preference for oxidized purines, such as 7,8-dihydro-8-oxoguanine (8-oxoG). Has AP (apurinic/apyrimidinic) lyase activity and introduces nicks in the DNA strand. Cleaves the DNA backbone by beta-delta elimination to generate a single-strand break at the site of the removed base with both 3'- and 5'-phosphates.</text>
</comment>
<comment type="catalytic activity">
    <reaction evidence="2">
        <text>Hydrolysis of DNA containing ring-opened 7-methylguanine residues, releasing 2,6-diamino-4-hydroxy-5-(N-methyl)formamidopyrimidine.</text>
        <dbReference type="EC" id="3.2.2.23"/>
    </reaction>
</comment>
<comment type="catalytic activity">
    <reaction evidence="2">
        <text>2'-deoxyribonucleotide-(2'-deoxyribose 5'-phosphate)-2'-deoxyribonucleotide-DNA = a 3'-end 2'-deoxyribonucleotide-(2,3-dehydro-2,3-deoxyribose 5'-phosphate)-DNA + a 5'-end 5'-phospho-2'-deoxyribonucleoside-DNA + H(+)</text>
        <dbReference type="Rhea" id="RHEA:66592"/>
        <dbReference type="Rhea" id="RHEA-COMP:13180"/>
        <dbReference type="Rhea" id="RHEA-COMP:16897"/>
        <dbReference type="Rhea" id="RHEA-COMP:17067"/>
        <dbReference type="ChEBI" id="CHEBI:15378"/>
        <dbReference type="ChEBI" id="CHEBI:136412"/>
        <dbReference type="ChEBI" id="CHEBI:157695"/>
        <dbReference type="ChEBI" id="CHEBI:167181"/>
        <dbReference type="EC" id="4.2.99.18"/>
    </reaction>
</comment>
<comment type="cofactor">
    <cofactor evidence="2">
        <name>Zn(2+)</name>
        <dbReference type="ChEBI" id="CHEBI:29105"/>
    </cofactor>
    <text evidence="2">Binds 1 zinc ion per subunit.</text>
</comment>
<comment type="subunit">
    <text evidence="2">Monomer.</text>
</comment>
<comment type="similarity">
    <text evidence="2">Belongs to the FPG family.</text>
</comment>
<keyword id="KW-0227">DNA damage</keyword>
<keyword id="KW-0234">DNA repair</keyword>
<keyword id="KW-0238">DNA-binding</keyword>
<keyword id="KW-0326">Glycosidase</keyword>
<keyword id="KW-0378">Hydrolase</keyword>
<keyword id="KW-0456">Lyase</keyword>
<keyword id="KW-0479">Metal-binding</keyword>
<keyword id="KW-0511">Multifunctional enzyme</keyword>
<keyword id="KW-1185">Reference proteome</keyword>
<keyword id="KW-0862">Zinc</keyword>
<keyword id="KW-0863">Zinc-finger</keyword>
<protein>
    <recommendedName>
        <fullName evidence="2">Formamidopyrimidine-DNA glycosylase</fullName>
        <shortName evidence="2">Fapy-DNA glycosylase</shortName>
        <ecNumber evidence="2">3.2.2.23</ecNumber>
    </recommendedName>
    <alternativeName>
        <fullName evidence="2">DNA-(apurinic or apyrimidinic site) lyase MutM</fullName>
        <shortName evidence="2">AP lyase MutM</shortName>
        <ecNumber evidence="2">4.2.99.18</ecNumber>
    </alternativeName>
</protein>
<reference key="1">
    <citation type="journal article" date="2004" name="Proc. Natl. Acad. Sci. U.S.A.">
        <title>Structural flexibility in the Burkholderia mallei genome.</title>
        <authorList>
            <person name="Nierman W.C."/>
            <person name="DeShazer D."/>
            <person name="Kim H.S."/>
            <person name="Tettelin H."/>
            <person name="Nelson K.E."/>
            <person name="Feldblyum T.V."/>
            <person name="Ulrich R.L."/>
            <person name="Ronning C.M."/>
            <person name="Brinkac L.M."/>
            <person name="Daugherty S.C."/>
            <person name="Davidsen T.D."/>
            <person name="DeBoy R.T."/>
            <person name="Dimitrov G."/>
            <person name="Dodson R.J."/>
            <person name="Durkin A.S."/>
            <person name="Gwinn M.L."/>
            <person name="Haft D.H."/>
            <person name="Khouri H.M."/>
            <person name="Kolonay J.F."/>
            <person name="Madupu R."/>
            <person name="Mohammoud Y."/>
            <person name="Nelson W.C."/>
            <person name="Radune D."/>
            <person name="Romero C.M."/>
            <person name="Sarria S."/>
            <person name="Selengut J."/>
            <person name="Shamblin C."/>
            <person name="Sullivan S.A."/>
            <person name="White O."/>
            <person name="Yu Y."/>
            <person name="Zafar N."/>
            <person name="Zhou L."/>
            <person name="Fraser C.M."/>
        </authorList>
    </citation>
    <scope>NUCLEOTIDE SEQUENCE [LARGE SCALE GENOMIC DNA]</scope>
    <source>
        <strain>ATCC 23344</strain>
    </source>
</reference>
<proteinExistence type="inferred from homology"/>
<accession>Q62FC7</accession>
<organism>
    <name type="scientific">Burkholderia mallei (strain ATCC 23344)</name>
    <dbReference type="NCBI Taxonomy" id="243160"/>
    <lineage>
        <taxon>Bacteria</taxon>
        <taxon>Pseudomonadati</taxon>
        <taxon>Pseudomonadota</taxon>
        <taxon>Betaproteobacteria</taxon>
        <taxon>Burkholderiales</taxon>
        <taxon>Burkholderiaceae</taxon>
        <taxon>Burkholderia</taxon>
        <taxon>pseudomallei group</taxon>
    </lineage>
</organism>
<dbReference type="EC" id="3.2.2.23" evidence="2"/>
<dbReference type="EC" id="4.2.99.18" evidence="2"/>
<dbReference type="EMBL" id="CP000010">
    <property type="protein sequence ID" value="AAU48096.1"/>
    <property type="molecule type" value="Genomic_DNA"/>
</dbReference>
<dbReference type="RefSeq" id="WP_004195234.1">
    <property type="nucleotide sequence ID" value="NC_006348.1"/>
</dbReference>
<dbReference type="RefSeq" id="YP_104600.1">
    <property type="nucleotide sequence ID" value="NC_006348.1"/>
</dbReference>
<dbReference type="SMR" id="Q62FC7"/>
<dbReference type="GeneID" id="92980781"/>
<dbReference type="KEGG" id="bma:BMA3115"/>
<dbReference type="PATRIC" id="fig|243160.12.peg.3192"/>
<dbReference type="eggNOG" id="COG0266">
    <property type="taxonomic scope" value="Bacteria"/>
</dbReference>
<dbReference type="HOGENOM" id="CLU_038423_1_1_4"/>
<dbReference type="Proteomes" id="UP000006693">
    <property type="component" value="Chromosome 1"/>
</dbReference>
<dbReference type="GO" id="GO:0034039">
    <property type="term" value="F:8-oxo-7,8-dihydroguanine DNA N-glycosylase activity"/>
    <property type="evidence" value="ECO:0007669"/>
    <property type="project" value="TreeGrafter"/>
</dbReference>
<dbReference type="GO" id="GO:0140078">
    <property type="term" value="F:class I DNA-(apurinic or apyrimidinic site) endonuclease activity"/>
    <property type="evidence" value="ECO:0007669"/>
    <property type="project" value="UniProtKB-EC"/>
</dbReference>
<dbReference type="GO" id="GO:0003684">
    <property type="term" value="F:damaged DNA binding"/>
    <property type="evidence" value="ECO:0007669"/>
    <property type="project" value="InterPro"/>
</dbReference>
<dbReference type="GO" id="GO:0008270">
    <property type="term" value="F:zinc ion binding"/>
    <property type="evidence" value="ECO:0007669"/>
    <property type="project" value="UniProtKB-UniRule"/>
</dbReference>
<dbReference type="GO" id="GO:0006284">
    <property type="term" value="P:base-excision repair"/>
    <property type="evidence" value="ECO:0007669"/>
    <property type="project" value="InterPro"/>
</dbReference>
<dbReference type="CDD" id="cd08966">
    <property type="entry name" value="EcFpg-like_N"/>
    <property type="match status" value="1"/>
</dbReference>
<dbReference type="FunFam" id="1.10.8.50:FF:000003">
    <property type="entry name" value="Formamidopyrimidine-DNA glycosylase"/>
    <property type="match status" value="1"/>
</dbReference>
<dbReference type="FunFam" id="3.20.190.10:FF:000001">
    <property type="entry name" value="Formamidopyrimidine-DNA glycosylase"/>
    <property type="match status" value="1"/>
</dbReference>
<dbReference type="Gene3D" id="1.10.8.50">
    <property type="match status" value="1"/>
</dbReference>
<dbReference type="Gene3D" id="3.20.190.10">
    <property type="entry name" value="MutM-like, N-terminal"/>
    <property type="match status" value="1"/>
</dbReference>
<dbReference type="HAMAP" id="MF_00103">
    <property type="entry name" value="Fapy_DNA_glycosyl"/>
    <property type="match status" value="1"/>
</dbReference>
<dbReference type="InterPro" id="IPR015886">
    <property type="entry name" value="DNA_glyclase/AP_lyase_DNA-bd"/>
</dbReference>
<dbReference type="InterPro" id="IPR015887">
    <property type="entry name" value="DNA_glyclase_Znf_dom_DNA_BS"/>
</dbReference>
<dbReference type="InterPro" id="IPR020629">
    <property type="entry name" value="Formamido-pyr_DNA_Glyclase"/>
</dbReference>
<dbReference type="InterPro" id="IPR012319">
    <property type="entry name" value="FPG_cat"/>
</dbReference>
<dbReference type="InterPro" id="IPR035937">
    <property type="entry name" value="MutM-like_N-ter"/>
</dbReference>
<dbReference type="InterPro" id="IPR010979">
    <property type="entry name" value="Ribosomal_uS13-like_H2TH"/>
</dbReference>
<dbReference type="InterPro" id="IPR000214">
    <property type="entry name" value="Znf_DNA_glyclase/AP_lyase"/>
</dbReference>
<dbReference type="InterPro" id="IPR010663">
    <property type="entry name" value="Znf_FPG/IleRS"/>
</dbReference>
<dbReference type="NCBIfam" id="TIGR00577">
    <property type="entry name" value="fpg"/>
    <property type="match status" value="1"/>
</dbReference>
<dbReference type="NCBIfam" id="NF002211">
    <property type="entry name" value="PRK01103.1"/>
    <property type="match status" value="1"/>
</dbReference>
<dbReference type="PANTHER" id="PTHR22993">
    <property type="entry name" value="FORMAMIDOPYRIMIDINE-DNA GLYCOSYLASE"/>
    <property type="match status" value="1"/>
</dbReference>
<dbReference type="PANTHER" id="PTHR22993:SF9">
    <property type="entry name" value="FORMAMIDOPYRIMIDINE-DNA GLYCOSYLASE"/>
    <property type="match status" value="1"/>
</dbReference>
<dbReference type="Pfam" id="PF01149">
    <property type="entry name" value="Fapy_DNA_glyco"/>
    <property type="match status" value="1"/>
</dbReference>
<dbReference type="Pfam" id="PF06831">
    <property type="entry name" value="H2TH"/>
    <property type="match status" value="1"/>
</dbReference>
<dbReference type="Pfam" id="PF06827">
    <property type="entry name" value="zf-FPG_IleRS"/>
    <property type="match status" value="1"/>
</dbReference>
<dbReference type="SMART" id="SM00898">
    <property type="entry name" value="Fapy_DNA_glyco"/>
    <property type="match status" value="1"/>
</dbReference>
<dbReference type="SMART" id="SM01232">
    <property type="entry name" value="H2TH"/>
    <property type="match status" value="1"/>
</dbReference>
<dbReference type="SUPFAM" id="SSF57716">
    <property type="entry name" value="Glucocorticoid receptor-like (DNA-binding domain)"/>
    <property type="match status" value="1"/>
</dbReference>
<dbReference type="SUPFAM" id="SSF81624">
    <property type="entry name" value="N-terminal domain of MutM-like DNA repair proteins"/>
    <property type="match status" value="1"/>
</dbReference>
<dbReference type="SUPFAM" id="SSF46946">
    <property type="entry name" value="S13-like H2TH domain"/>
    <property type="match status" value="1"/>
</dbReference>
<dbReference type="PROSITE" id="PS51068">
    <property type="entry name" value="FPG_CAT"/>
    <property type="match status" value="1"/>
</dbReference>
<dbReference type="PROSITE" id="PS01242">
    <property type="entry name" value="ZF_FPG_1"/>
    <property type="match status" value="1"/>
</dbReference>
<dbReference type="PROSITE" id="PS51066">
    <property type="entry name" value="ZF_FPG_2"/>
    <property type="match status" value="1"/>
</dbReference>
<name>FPG_BURMA</name>
<sequence>MPELPEVEVTRRGIEPFVAGRRVERVDVRTAMLRWPVPAGFAEMLRSREVLRVERRGKYLLFEVDAGWFIVHLGMTGTLRVLPNDAPPPAPAKHDHVDWIFDEFVLRFRDPRRFGAVLWHPRDAGDVHAHPLLASLGVEPFSAALLFGRTRGRTVSVKQALLAGDIVVGVGNIYASESLFRAGIRPTTAAGRVSLPRYERLADAVRATLADAIERGGSTLRDFVGSNGESGYFQLDCFVYDRAGEPCRVCGAPIRQIVQGQRSTYFCPNCQR</sequence>